<organism>
    <name type="scientific">Staphylococcus epidermidis (strain ATCC 12228 / FDA PCI 1200)</name>
    <dbReference type="NCBI Taxonomy" id="176280"/>
    <lineage>
        <taxon>Bacteria</taxon>
        <taxon>Bacillati</taxon>
        <taxon>Bacillota</taxon>
        <taxon>Bacilli</taxon>
        <taxon>Bacillales</taxon>
        <taxon>Staphylococcaceae</taxon>
        <taxon>Staphylococcus</taxon>
    </lineage>
</organism>
<evidence type="ECO:0000250" key="1"/>
<evidence type="ECO:0000255" key="2"/>
<evidence type="ECO:0000305" key="3"/>
<gene>
    <name type="primary">cdsA</name>
    <name type="ordered locus">SE_0937</name>
</gene>
<accession>Q8CST9</accession>
<protein>
    <recommendedName>
        <fullName>Phosphatidate cytidylyltransferase</fullName>
        <ecNumber>2.7.7.41</ecNumber>
    </recommendedName>
    <alternativeName>
        <fullName>CDP-DAG synthase</fullName>
    </alternativeName>
    <alternativeName>
        <fullName>CDP-DG synthase</fullName>
    </alternativeName>
    <alternativeName>
        <fullName>CDP-diacylglycerol synthase</fullName>
        <shortName>CDS</shortName>
    </alternativeName>
    <alternativeName>
        <fullName>CDP-diglyceride pyrophosphorylase</fullName>
    </alternativeName>
    <alternativeName>
        <fullName>CDP-diglyceride synthase</fullName>
    </alternativeName>
    <alternativeName>
        <fullName>CTP:phosphatidate cytidylyltransferase</fullName>
    </alternativeName>
</protein>
<reference key="1">
    <citation type="journal article" date="2003" name="Mol. Microbiol.">
        <title>Genome-based analysis of virulence genes in a non-biofilm-forming Staphylococcus epidermidis strain (ATCC 12228).</title>
        <authorList>
            <person name="Zhang Y.-Q."/>
            <person name="Ren S.-X."/>
            <person name="Li H.-L."/>
            <person name="Wang Y.-X."/>
            <person name="Fu G."/>
            <person name="Yang J."/>
            <person name="Qin Z.-Q."/>
            <person name="Miao Y.-G."/>
            <person name="Wang W.-Y."/>
            <person name="Chen R.-S."/>
            <person name="Shen Y."/>
            <person name="Chen Z."/>
            <person name="Yuan Z.-H."/>
            <person name="Zhao G.-P."/>
            <person name="Qu D."/>
            <person name="Danchin A."/>
            <person name="Wen Y.-M."/>
        </authorList>
    </citation>
    <scope>NUCLEOTIDE SEQUENCE [LARGE SCALE GENOMIC DNA]</scope>
    <source>
        <strain>ATCC 12228 / FDA PCI 1200</strain>
    </source>
</reference>
<sequence>MKVRTLTAIIALLIFLPILLKGGLILMLFAFLLALIALKELLNMNMIKFLSIPGLISALALIIIMLPQDAGEWVQVIQLKGLIAMSFIVLSYTVLSKNRFSFMDAAFCLMSVAYVGIGFMYFYETRSEGLRYILFAFLIVWLTDTGAYIFGRLMGKHKLWPVISPNKTIEGFFGGILCSILVPLVMQMFVDLHMNIWLLLLVTIVLSMFGQLGDLVESGFKRHFGVKDSGRILPGHGGILDRFDSFMFVLPLLNILLIQT</sequence>
<name>CDSA_STAES</name>
<keyword id="KW-1003">Cell membrane</keyword>
<keyword id="KW-0444">Lipid biosynthesis</keyword>
<keyword id="KW-0443">Lipid metabolism</keyword>
<keyword id="KW-0472">Membrane</keyword>
<keyword id="KW-0548">Nucleotidyltransferase</keyword>
<keyword id="KW-0594">Phospholipid biosynthesis</keyword>
<keyword id="KW-1208">Phospholipid metabolism</keyword>
<keyword id="KW-0808">Transferase</keyword>
<keyword id="KW-0812">Transmembrane</keyword>
<keyword id="KW-1133">Transmembrane helix</keyword>
<feature type="chain" id="PRO_0000090753" description="Phosphatidate cytidylyltransferase">
    <location>
        <begin position="1"/>
        <end position="260"/>
    </location>
</feature>
<feature type="transmembrane region" description="Helical" evidence="2">
    <location>
        <begin position="9"/>
        <end position="29"/>
    </location>
</feature>
<feature type="transmembrane region" description="Helical" evidence="2">
    <location>
        <begin position="46"/>
        <end position="66"/>
    </location>
</feature>
<feature type="transmembrane region" description="Helical" evidence="2">
    <location>
        <begin position="70"/>
        <end position="90"/>
    </location>
</feature>
<feature type="transmembrane region" description="Helical" evidence="2">
    <location>
        <begin position="102"/>
        <end position="122"/>
    </location>
</feature>
<feature type="transmembrane region" description="Helical" evidence="2">
    <location>
        <begin position="130"/>
        <end position="150"/>
    </location>
</feature>
<feature type="transmembrane region" description="Helical" evidence="2">
    <location>
        <begin position="172"/>
        <end position="192"/>
    </location>
</feature>
<feature type="transmembrane region" description="Helical" evidence="2">
    <location>
        <begin position="196"/>
        <end position="216"/>
    </location>
</feature>
<comment type="catalytic activity">
    <reaction>
        <text>a 1,2-diacyl-sn-glycero-3-phosphate + CTP + H(+) = a CDP-1,2-diacyl-sn-glycerol + diphosphate</text>
        <dbReference type="Rhea" id="RHEA:16229"/>
        <dbReference type="ChEBI" id="CHEBI:15378"/>
        <dbReference type="ChEBI" id="CHEBI:33019"/>
        <dbReference type="ChEBI" id="CHEBI:37563"/>
        <dbReference type="ChEBI" id="CHEBI:58332"/>
        <dbReference type="ChEBI" id="CHEBI:58608"/>
        <dbReference type="EC" id="2.7.7.41"/>
    </reaction>
</comment>
<comment type="pathway">
    <text>Phospholipid metabolism; CDP-diacylglycerol biosynthesis; CDP-diacylglycerol from sn-glycerol 3-phosphate: step 3/3.</text>
</comment>
<comment type="subcellular location">
    <subcellularLocation>
        <location evidence="1">Cell membrane</location>
        <topology evidence="1">Multi-pass membrane protein</topology>
    </subcellularLocation>
</comment>
<comment type="similarity">
    <text evidence="3">Belongs to the CDS family.</text>
</comment>
<dbReference type="EC" id="2.7.7.41"/>
<dbReference type="EMBL" id="AE015929">
    <property type="protein sequence ID" value="AAO04534.1"/>
    <property type="molecule type" value="Genomic_DNA"/>
</dbReference>
<dbReference type="RefSeq" id="NP_764492.1">
    <property type="nucleotide sequence ID" value="NC_004461.1"/>
</dbReference>
<dbReference type="RefSeq" id="WP_001829499.1">
    <property type="nucleotide sequence ID" value="NZ_WBME01000001.1"/>
</dbReference>
<dbReference type="SMR" id="Q8CST9"/>
<dbReference type="KEGG" id="sep:SE_0937"/>
<dbReference type="PATRIC" id="fig|176280.10.peg.912"/>
<dbReference type="eggNOG" id="COG4589">
    <property type="taxonomic scope" value="Bacteria"/>
</dbReference>
<dbReference type="HOGENOM" id="CLU_037294_2_2_9"/>
<dbReference type="OrthoDB" id="9799199at2"/>
<dbReference type="UniPathway" id="UPA00557">
    <property type="reaction ID" value="UER00614"/>
</dbReference>
<dbReference type="Proteomes" id="UP000001411">
    <property type="component" value="Chromosome"/>
</dbReference>
<dbReference type="GO" id="GO:0005886">
    <property type="term" value="C:plasma membrane"/>
    <property type="evidence" value="ECO:0007669"/>
    <property type="project" value="UniProtKB-SubCell"/>
</dbReference>
<dbReference type="GO" id="GO:0004605">
    <property type="term" value="F:phosphatidate cytidylyltransferase activity"/>
    <property type="evidence" value="ECO:0007669"/>
    <property type="project" value="UniProtKB-EC"/>
</dbReference>
<dbReference type="GO" id="GO:0016024">
    <property type="term" value="P:CDP-diacylglycerol biosynthetic process"/>
    <property type="evidence" value="ECO:0007669"/>
    <property type="project" value="UniProtKB-UniPathway"/>
</dbReference>
<dbReference type="InterPro" id="IPR000374">
    <property type="entry name" value="PC_trans"/>
</dbReference>
<dbReference type="PANTHER" id="PTHR46382">
    <property type="entry name" value="PHOSPHATIDATE CYTIDYLYLTRANSFERASE"/>
    <property type="match status" value="1"/>
</dbReference>
<dbReference type="PANTHER" id="PTHR46382:SF1">
    <property type="entry name" value="PHOSPHATIDATE CYTIDYLYLTRANSFERASE"/>
    <property type="match status" value="1"/>
</dbReference>
<dbReference type="Pfam" id="PF01148">
    <property type="entry name" value="CTP_transf_1"/>
    <property type="match status" value="1"/>
</dbReference>
<dbReference type="PROSITE" id="PS01315">
    <property type="entry name" value="CDS"/>
    <property type="match status" value="1"/>
</dbReference>
<proteinExistence type="inferred from homology"/>